<proteinExistence type="inferred from homology"/>
<gene>
    <name evidence="1" type="primary">glgB</name>
    <name type="ordered locus">Dgeo_0981</name>
</gene>
<keyword id="KW-0119">Carbohydrate metabolism</keyword>
<keyword id="KW-0320">Glycogen biosynthesis</keyword>
<keyword id="KW-0321">Glycogen metabolism</keyword>
<keyword id="KW-0328">Glycosyltransferase</keyword>
<keyword id="KW-0808">Transferase</keyword>
<organism>
    <name type="scientific">Deinococcus geothermalis (strain DSM 11300 / CIP 105573 / AG-3a)</name>
    <dbReference type="NCBI Taxonomy" id="319795"/>
    <lineage>
        <taxon>Bacteria</taxon>
        <taxon>Thermotogati</taxon>
        <taxon>Deinococcota</taxon>
        <taxon>Deinococci</taxon>
        <taxon>Deinococcales</taxon>
        <taxon>Deinococcaceae</taxon>
        <taxon>Deinococcus</taxon>
    </lineage>
</organism>
<reference key="1">
    <citation type="submission" date="2006-04" db="EMBL/GenBank/DDBJ databases">
        <title>Complete sequence of chromosome of Deinococcus geothermalis DSM 11300.</title>
        <authorList>
            <person name="Copeland A."/>
            <person name="Lucas S."/>
            <person name="Lapidus A."/>
            <person name="Barry K."/>
            <person name="Detter J.C."/>
            <person name="Glavina del Rio T."/>
            <person name="Hammon N."/>
            <person name="Israni S."/>
            <person name="Dalin E."/>
            <person name="Tice H."/>
            <person name="Pitluck S."/>
            <person name="Brettin T."/>
            <person name="Bruce D."/>
            <person name="Han C."/>
            <person name="Tapia R."/>
            <person name="Saunders E."/>
            <person name="Gilna P."/>
            <person name="Schmutz J."/>
            <person name="Larimer F."/>
            <person name="Land M."/>
            <person name="Hauser L."/>
            <person name="Kyrpides N."/>
            <person name="Kim E."/>
            <person name="Daly M.J."/>
            <person name="Fredrickson J.K."/>
            <person name="Makarova K.S."/>
            <person name="Gaidamakova E.K."/>
            <person name="Zhai M."/>
            <person name="Richardson P."/>
        </authorList>
    </citation>
    <scope>NUCLEOTIDE SEQUENCE [LARGE SCALE GENOMIC DNA]</scope>
    <source>
        <strain>DSM 11300 / CIP 105573 / AG-3a</strain>
    </source>
</reference>
<dbReference type="EC" id="2.4.1.18" evidence="1"/>
<dbReference type="EMBL" id="CP000359">
    <property type="protein sequence ID" value="ABF45281.1"/>
    <property type="molecule type" value="Genomic_DNA"/>
</dbReference>
<dbReference type="SMR" id="Q1IZQ3"/>
<dbReference type="STRING" id="319795.Dgeo_0981"/>
<dbReference type="CAZy" id="CBM48">
    <property type="family name" value="Carbohydrate-Binding Module Family 48"/>
</dbReference>
<dbReference type="CAZy" id="GH13">
    <property type="family name" value="Glycoside Hydrolase Family 13"/>
</dbReference>
<dbReference type="KEGG" id="dge:Dgeo_0981"/>
<dbReference type="eggNOG" id="COG0296">
    <property type="taxonomic scope" value="Bacteria"/>
</dbReference>
<dbReference type="HOGENOM" id="CLU_004245_3_2_0"/>
<dbReference type="BRENDA" id="2.4.1.18">
    <property type="organism ID" value="10152"/>
</dbReference>
<dbReference type="UniPathway" id="UPA00164"/>
<dbReference type="Proteomes" id="UP000002431">
    <property type="component" value="Chromosome"/>
</dbReference>
<dbReference type="GO" id="GO:0005829">
    <property type="term" value="C:cytosol"/>
    <property type="evidence" value="ECO:0007669"/>
    <property type="project" value="TreeGrafter"/>
</dbReference>
<dbReference type="GO" id="GO:0003844">
    <property type="term" value="F:1,4-alpha-glucan branching enzyme activity"/>
    <property type="evidence" value="ECO:0007669"/>
    <property type="project" value="UniProtKB-UniRule"/>
</dbReference>
<dbReference type="GO" id="GO:0043169">
    <property type="term" value="F:cation binding"/>
    <property type="evidence" value="ECO:0007669"/>
    <property type="project" value="InterPro"/>
</dbReference>
<dbReference type="GO" id="GO:0004553">
    <property type="term" value="F:hydrolase activity, hydrolyzing O-glycosyl compounds"/>
    <property type="evidence" value="ECO:0007669"/>
    <property type="project" value="InterPro"/>
</dbReference>
<dbReference type="GO" id="GO:0005978">
    <property type="term" value="P:glycogen biosynthetic process"/>
    <property type="evidence" value="ECO:0007669"/>
    <property type="project" value="UniProtKB-UniRule"/>
</dbReference>
<dbReference type="CDD" id="cd11322">
    <property type="entry name" value="AmyAc_Glg_BE"/>
    <property type="match status" value="1"/>
</dbReference>
<dbReference type="CDD" id="cd02855">
    <property type="entry name" value="E_set_GBE_prok_N"/>
    <property type="match status" value="1"/>
</dbReference>
<dbReference type="FunFam" id="3.20.20.80:FF:000003">
    <property type="entry name" value="1,4-alpha-glucan branching enzyme GlgB"/>
    <property type="match status" value="1"/>
</dbReference>
<dbReference type="Gene3D" id="3.20.20.80">
    <property type="entry name" value="Glycosidases"/>
    <property type="match status" value="1"/>
</dbReference>
<dbReference type="Gene3D" id="2.60.40.1180">
    <property type="entry name" value="Golgi alpha-mannosidase II"/>
    <property type="match status" value="1"/>
</dbReference>
<dbReference type="Gene3D" id="2.60.40.10">
    <property type="entry name" value="Immunoglobulins"/>
    <property type="match status" value="1"/>
</dbReference>
<dbReference type="HAMAP" id="MF_00685">
    <property type="entry name" value="GlgB"/>
    <property type="match status" value="1"/>
</dbReference>
<dbReference type="InterPro" id="IPR006048">
    <property type="entry name" value="A-amylase/branching_C"/>
</dbReference>
<dbReference type="InterPro" id="IPR037439">
    <property type="entry name" value="Branching_enzy"/>
</dbReference>
<dbReference type="InterPro" id="IPR006407">
    <property type="entry name" value="GlgB"/>
</dbReference>
<dbReference type="InterPro" id="IPR044143">
    <property type="entry name" value="GlgB_N_E_set_prok"/>
</dbReference>
<dbReference type="InterPro" id="IPR006047">
    <property type="entry name" value="Glyco_hydro_13_cat_dom"/>
</dbReference>
<dbReference type="InterPro" id="IPR004193">
    <property type="entry name" value="Glyco_hydro_13_N"/>
</dbReference>
<dbReference type="InterPro" id="IPR013780">
    <property type="entry name" value="Glyco_hydro_b"/>
</dbReference>
<dbReference type="InterPro" id="IPR017853">
    <property type="entry name" value="Glycoside_hydrolase_SF"/>
</dbReference>
<dbReference type="InterPro" id="IPR013783">
    <property type="entry name" value="Ig-like_fold"/>
</dbReference>
<dbReference type="InterPro" id="IPR014756">
    <property type="entry name" value="Ig_E-set"/>
</dbReference>
<dbReference type="NCBIfam" id="TIGR01515">
    <property type="entry name" value="branching_enzym"/>
    <property type="match status" value="1"/>
</dbReference>
<dbReference type="NCBIfam" id="NF003811">
    <property type="entry name" value="PRK05402.1"/>
    <property type="match status" value="1"/>
</dbReference>
<dbReference type="NCBIfam" id="NF008967">
    <property type="entry name" value="PRK12313.1"/>
    <property type="match status" value="1"/>
</dbReference>
<dbReference type="NCBIfam" id="NF011294">
    <property type="entry name" value="PRK14706.1"/>
    <property type="match status" value="1"/>
</dbReference>
<dbReference type="PANTHER" id="PTHR43651">
    <property type="entry name" value="1,4-ALPHA-GLUCAN-BRANCHING ENZYME"/>
    <property type="match status" value="1"/>
</dbReference>
<dbReference type="PANTHER" id="PTHR43651:SF3">
    <property type="entry name" value="1,4-ALPHA-GLUCAN-BRANCHING ENZYME"/>
    <property type="match status" value="1"/>
</dbReference>
<dbReference type="Pfam" id="PF00128">
    <property type="entry name" value="Alpha-amylase"/>
    <property type="match status" value="1"/>
</dbReference>
<dbReference type="Pfam" id="PF02806">
    <property type="entry name" value="Alpha-amylase_C"/>
    <property type="match status" value="1"/>
</dbReference>
<dbReference type="Pfam" id="PF02922">
    <property type="entry name" value="CBM_48"/>
    <property type="match status" value="1"/>
</dbReference>
<dbReference type="PIRSF" id="PIRSF000463">
    <property type="entry name" value="GlgB"/>
    <property type="match status" value="1"/>
</dbReference>
<dbReference type="SMART" id="SM00642">
    <property type="entry name" value="Aamy"/>
    <property type="match status" value="1"/>
</dbReference>
<dbReference type="SUPFAM" id="SSF51445">
    <property type="entry name" value="(Trans)glycosidases"/>
    <property type="match status" value="1"/>
</dbReference>
<dbReference type="SUPFAM" id="SSF81296">
    <property type="entry name" value="E set domains"/>
    <property type="match status" value="1"/>
</dbReference>
<dbReference type="SUPFAM" id="SSF51011">
    <property type="entry name" value="Glycosyl hydrolase domain"/>
    <property type="match status" value="1"/>
</dbReference>
<accession>Q1IZQ3</accession>
<sequence length="652" mass="74437">MLDPLRASSPATLALMSSLPLPLDHGHLQKLVTADLVRPDHLLGAHPVTENGVEGVRFAVWAPRAQHVSVVGDFNGWNGFDHPMQRLDFGFWGAFVPSARPGQRYKFRVTGADGRTVDKMDPYGAFTEVRPNTASIIWPLAFEWTDDAWMQKRTPGFDRPISIYEVHVGSWARRDDGWFLNYRELAHRLADYVTFMGYTHVELLGVMEHPFDGSWGYQVTGYYAPTSRLGAPEDFAYLVNHLHERGIGVIVDWVPGHFPTDEAGLAHFDGAPLYEYSDPRKGYHYDWNTYIFDYGRNEVMMFLIGSALKWLQDFHVDGLRVDAVASMLYLDFSRTEWVPNIHGGRENLEAIAFLKRLNEVVHHMAPGCMMIAEESTAFPGVTSPTPFGLGFDYKWAMGWMNDTLYYFEQDPLWRKYHHHKLTFFNVYRTGENYILAISHDEVVHLKKAMVSKMPGDWYMQRAGYRAFLAMMWTTPGKKLLFMGQEFAQGTEWNHDEALPWDVTDLPEHRGVMNLVRRLNGLYRERPDLHIGDTWEEGQLWVSADDTDNSVYAYIRRDPRPQAEGGGAWSLAVANLTPVYREGYPIGVPQGGEYRVLLSTDDGEYGGFGTQQPDLTAKEEGWNGQTHHLRLNLPPMSVLLLEHVGVTPRSEDR</sequence>
<name>GLGB_DEIGD</name>
<comment type="function">
    <text evidence="1">Catalyzes the formation of the alpha-1,6-glucosidic linkages in glycogen by scission of a 1,4-alpha-linked oligosaccharide from growing alpha-1,4-glucan chains and the subsequent attachment of the oligosaccharide to the alpha-1,6 position.</text>
</comment>
<comment type="catalytic activity">
    <reaction evidence="1">
        <text>Transfers a segment of a (1-&gt;4)-alpha-D-glucan chain to a primary hydroxy group in a similar glucan chain.</text>
        <dbReference type="EC" id="2.4.1.18"/>
    </reaction>
</comment>
<comment type="pathway">
    <text evidence="1">Glycan biosynthesis; glycogen biosynthesis.</text>
</comment>
<comment type="subunit">
    <text evidence="1">Monomer.</text>
</comment>
<comment type="similarity">
    <text evidence="1">Belongs to the glycosyl hydrolase 13 family. GlgB subfamily.</text>
</comment>
<feature type="chain" id="PRO_0000260650" description="1,4-alpha-glucan branching enzyme GlgB">
    <location>
        <begin position="1"/>
        <end position="652"/>
    </location>
</feature>
<feature type="active site" description="Nucleophile" evidence="1">
    <location>
        <position position="322"/>
    </location>
</feature>
<feature type="active site" description="Proton donor" evidence="1">
    <location>
        <position position="373"/>
    </location>
</feature>
<protein>
    <recommendedName>
        <fullName evidence="1">1,4-alpha-glucan branching enzyme GlgB</fullName>
        <ecNumber evidence="1">2.4.1.18</ecNumber>
    </recommendedName>
    <alternativeName>
        <fullName evidence="1">1,4-alpha-D-glucan:1,4-alpha-D-glucan 6-glucosyl-transferase</fullName>
    </alternativeName>
    <alternativeName>
        <fullName evidence="1">Alpha-(1-&gt;4)-glucan branching enzyme</fullName>
    </alternativeName>
    <alternativeName>
        <fullName evidence="1">Glycogen branching enzyme</fullName>
        <shortName evidence="1">BE</shortName>
    </alternativeName>
</protein>
<evidence type="ECO:0000255" key="1">
    <source>
        <dbReference type="HAMAP-Rule" id="MF_00685"/>
    </source>
</evidence>